<gene>
    <name evidence="1" type="primary">fliW</name>
    <name type="ordered locus">BDU_182</name>
</gene>
<evidence type="ECO:0000255" key="1">
    <source>
        <dbReference type="HAMAP-Rule" id="MF_01185"/>
    </source>
</evidence>
<proteinExistence type="inferred from homology"/>
<name>FLIW_BORDL</name>
<sequence>MKNKFSIKVKFPEGILGFEDIKEFIIKDSAHKPFSIMQSINGEINFLVTSPFNFLEKYLPNIENKDWLDIQAENENEKVILCIINMHVKNYKEITANLKAPIILNKKKLIGKQAISTNEEHYLRYRVFKE</sequence>
<organism>
    <name type="scientific">Borrelia duttonii (strain Ly)</name>
    <dbReference type="NCBI Taxonomy" id="412419"/>
    <lineage>
        <taxon>Bacteria</taxon>
        <taxon>Pseudomonadati</taxon>
        <taxon>Spirochaetota</taxon>
        <taxon>Spirochaetia</taxon>
        <taxon>Spirochaetales</taxon>
        <taxon>Borreliaceae</taxon>
        <taxon>Borrelia</taxon>
    </lineage>
</organism>
<accession>B5RL09</accession>
<protein>
    <recommendedName>
        <fullName evidence="1">Flagellar assembly factor FliW</fullName>
    </recommendedName>
</protein>
<feature type="chain" id="PRO_1000138250" description="Flagellar assembly factor FliW">
    <location>
        <begin position="1"/>
        <end position="130"/>
    </location>
</feature>
<dbReference type="EMBL" id="CP000976">
    <property type="protein sequence ID" value="ACH93138.1"/>
    <property type="molecule type" value="Genomic_DNA"/>
</dbReference>
<dbReference type="RefSeq" id="WP_012537950.1">
    <property type="nucleotide sequence ID" value="NC_011229.1"/>
</dbReference>
<dbReference type="SMR" id="B5RL09"/>
<dbReference type="STRING" id="412419.BDU_182"/>
<dbReference type="KEGG" id="bdu:BDU_182"/>
<dbReference type="eggNOG" id="COG1699">
    <property type="taxonomic scope" value="Bacteria"/>
</dbReference>
<dbReference type="HOGENOM" id="CLU_112356_0_2_12"/>
<dbReference type="OrthoDB" id="9801235at2"/>
<dbReference type="Proteomes" id="UP000000611">
    <property type="component" value="Chromosome"/>
</dbReference>
<dbReference type="GO" id="GO:0005737">
    <property type="term" value="C:cytoplasm"/>
    <property type="evidence" value="ECO:0007669"/>
    <property type="project" value="UniProtKB-SubCell"/>
</dbReference>
<dbReference type="GO" id="GO:0044780">
    <property type="term" value="P:bacterial-type flagellum assembly"/>
    <property type="evidence" value="ECO:0007669"/>
    <property type="project" value="UniProtKB-UniRule"/>
</dbReference>
<dbReference type="GO" id="GO:0006417">
    <property type="term" value="P:regulation of translation"/>
    <property type="evidence" value="ECO:0007669"/>
    <property type="project" value="UniProtKB-KW"/>
</dbReference>
<dbReference type="Gene3D" id="2.30.290.10">
    <property type="entry name" value="BH3618-like"/>
    <property type="match status" value="1"/>
</dbReference>
<dbReference type="HAMAP" id="MF_01185">
    <property type="entry name" value="FliW"/>
    <property type="match status" value="1"/>
</dbReference>
<dbReference type="InterPro" id="IPR003775">
    <property type="entry name" value="Flagellar_assembly_factor_FliW"/>
</dbReference>
<dbReference type="InterPro" id="IPR024046">
    <property type="entry name" value="Flagellar_assmbl_FliW_dom_sf"/>
</dbReference>
<dbReference type="NCBIfam" id="NF009793">
    <property type="entry name" value="PRK13285.1-1"/>
    <property type="match status" value="1"/>
</dbReference>
<dbReference type="PANTHER" id="PTHR39190">
    <property type="entry name" value="FLAGELLAR ASSEMBLY FACTOR FLIW"/>
    <property type="match status" value="1"/>
</dbReference>
<dbReference type="PANTHER" id="PTHR39190:SF1">
    <property type="entry name" value="FLAGELLAR ASSEMBLY FACTOR FLIW"/>
    <property type="match status" value="1"/>
</dbReference>
<dbReference type="Pfam" id="PF02623">
    <property type="entry name" value="FliW"/>
    <property type="match status" value="1"/>
</dbReference>
<dbReference type="SUPFAM" id="SSF141457">
    <property type="entry name" value="BH3618-like"/>
    <property type="match status" value="1"/>
</dbReference>
<reference key="1">
    <citation type="journal article" date="2008" name="PLoS Genet.">
        <title>The genome of Borrelia recurrentis, the agent of deadly louse-borne relapsing fever, is a degraded subset of tick-borne Borrelia duttonii.</title>
        <authorList>
            <person name="Lescot M."/>
            <person name="Audic S."/>
            <person name="Robert C."/>
            <person name="Nguyen T.T."/>
            <person name="Blanc G."/>
            <person name="Cutler S.J."/>
            <person name="Wincker P."/>
            <person name="Couloux A."/>
            <person name="Claverie J.-M."/>
            <person name="Raoult D."/>
            <person name="Drancourt M."/>
        </authorList>
    </citation>
    <scope>NUCLEOTIDE SEQUENCE [LARGE SCALE GENOMIC DNA]</scope>
    <source>
        <strain>Ly</strain>
    </source>
</reference>
<keyword id="KW-1005">Bacterial flagellum biogenesis</keyword>
<keyword id="KW-0143">Chaperone</keyword>
<keyword id="KW-0963">Cytoplasm</keyword>
<keyword id="KW-0810">Translation regulation</keyword>
<comment type="function">
    <text evidence="1">Acts as an anti-CsrA protein, binds CsrA and prevents it from repressing translation of its target genes, one of which is flagellin. Binds to flagellin and participates in the assembly of the flagellum.</text>
</comment>
<comment type="subunit">
    <text evidence="1">Interacts with translational regulator CsrA and flagellin(s).</text>
</comment>
<comment type="subcellular location">
    <subcellularLocation>
        <location evidence="1">Cytoplasm</location>
    </subcellularLocation>
</comment>
<comment type="similarity">
    <text evidence="1">Belongs to the FliW family.</text>
</comment>